<accession>P23550</accession>
<sequence length="566" mass="62622">MKKRRSSKVILSLAIVVALLAAVEPNAALAAAPPSAMQSYVEAMQPGWNLGNSLDAVGADETLARGNPRITKELIQNIAAQGYKSIRIPVTWDSHIGAAPNYQIEAAYLNRVQEVVQWALDANLYVMINVHHDSWLWISKMESQHDQVLARYNAIWTQIANKFKNSPSKLMFESVNEPRFTDGGTTDEAKQQKMLDELNVSFFNIVRNSGGQNATRPLVLSTLEASPTQERMTALYNTMTKLNDKNLIATVHFYGFWPFSVNIAGYTKFDAETQNDIITTFDNVYNTFVAKGIPVVVGEYGLLGFDKNTGVIEQGEKLKFFEFFAQYVKQKSISTMLWDNGQHFNRTSFKWSDPDLFNMIKASWTGRSSTASSDLIHVKQGTAVKDTSVQLNLNGNTLTSLSVNGTTLKSGTDYTLNSSRLTFKASQLTKLTSLGKLGVNATIVTKFNRGADWKFNVVLYNTPKLSSTTGTTSSFAIPTAFNGDQLATMEAVYVNGGNAGPHNWTSFKEFETTFSPAYSEGKIKLQQAFFNEVNDTTVTLKFQFWSGEIVNYTIKKSGSTVTGTAS</sequence>
<gene>
    <name type="primary">celB</name>
</gene>
<proteinExistence type="inferred from homology"/>
<protein>
    <recommendedName>
        <fullName>Endoglucanase B</fullName>
        <ecNumber>3.2.1.4</ecNumber>
    </recommendedName>
    <alternativeName>
        <fullName>Cellulase B</fullName>
    </alternativeName>
    <alternativeName>
        <fullName>Endo-1,4-beta-glucanase B</fullName>
        <shortName>EG-B</shortName>
    </alternativeName>
</protein>
<organism>
    <name type="scientific">Paenibacillus lautus</name>
    <name type="common">Bacillus lautus</name>
    <dbReference type="NCBI Taxonomy" id="1401"/>
    <lineage>
        <taxon>Bacteria</taxon>
        <taxon>Bacillati</taxon>
        <taxon>Bacillota</taxon>
        <taxon>Bacilli</taxon>
        <taxon>Bacillales</taxon>
        <taxon>Paenibacillaceae</taxon>
        <taxon>Paenibacillus</taxon>
    </lineage>
</organism>
<reference key="1">
    <citation type="journal article" date="1990" name="Gene">
        <title>Multiple endo-beta-1,4-glucanase-encoding genes from Bacillus lautus PL236 and characterization of the celB gene.</title>
        <authorList>
            <person name="Joergensen P.L."/>
            <person name="Hansen C.K."/>
        </authorList>
    </citation>
    <scope>NUCLEOTIDE SEQUENCE [GENOMIC DNA]</scope>
    <source>
        <strain>PL236</strain>
    </source>
</reference>
<dbReference type="EC" id="3.2.1.4"/>
<dbReference type="EMBL" id="M33762">
    <property type="protein sequence ID" value="AAA22408.1"/>
    <property type="molecule type" value="Genomic_DNA"/>
</dbReference>
<dbReference type="PIR" id="JH0218">
    <property type="entry name" value="JH0218"/>
</dbReference>
<dbReference type="SMR" id="P23550"/>
<dbReference type="CAZy" id="CBM46">
    <property type="family name" value="Carbohydrate-Binding Module Family 46"/>
</dbReference>
<dbReference type="CAZy" id="GH5">
    <property type="family name" value="Glycoside Hydrolase Family 5"/>
</dbReference>
<dbReference type="GO" id="GO:0009986">
    <property type="term" value="C:cell surface"/>
    <property type="evidence" value="ECO:0007669"/>
    <property type="project" value="TreeGrafter"/>
</dbReference>
<dbReference type="GO" id="GO:0005576">
    <property type="term" value="C:extracellular region"/>
    <property type="evidence" value="ECO:0007669"/>
    <property type="project" value="TreeGrafter"/>
</dbReference>
<dbReference type="GO" id="GO:0008422">
    <property type="term" value="F:beta-glucosidase activity"/>
    <property type="evidence" value="ECO:0007669"/>
    <property type="project" value="TreeGrafter"/>
</dbReference>
<dbReference type="GO" id="GO:0008810">
    <property type="term" value="F:cellulase activity"/>
    <property type="evidence" value="ECO:0007669"/>
    <property type="project" value="UniProtKB-EC"/>
</dbReference>
<dbReference type="GO" id="GO:0030245">
    <property type="term" value="P:cellulose catabolic process"/>
    <property type="evidence" value="ECO:0007669"/>
    <property type="project" value="UniProtKB-KW"/>
</dbReference>
<dbReference type="Gene3D" id="3.20.20.80">
    <property type="entry name" value="Glycosidases"/>
    <property type="match status" value="1"/>
</dbReference>
<dbReference type="Gene3D" id="2.60.40.10">
    <property type="entry name" value="Immunoglobulins"/>
    <property type="match status" value="1"/>
</dbReference>
<dbReference type="InterPro" id="IPR005102">
    <property type="entry name" value="Carbo-bd_X2"/>
</dbReference>
<dbReference type="InterPro" id="IPR040946">
    <property type="entry name" value="CBM46"/>
</dbReference>
<dbReference type="InterPro" id="IPR001547">
    <property type="entry name" value="Glyco_hydro_5"/>
</dbReference>
<dbReference type="InterPro" id="IPR018087">
    <property type="entry name" value="Glyco_hydro_5_CS"/>
</dbReference>
<dbReference type="InterPro" id="IPR016282">
    <property type="entry name" value="Glyco_hydro_5_endoGlcnase_B"/>
</dbReference>
<dbReference type="InterPro" id="IPR017853">
    <property type="entry name" value="Glycoside_hydrolase_SF"/>
</dbReference>
<dbReference type="InterPro" id="IPR050386">
    <property type="entry name" value="Glycosyl_hydrolase_5"/>
</dbReference>
<dbReference type="InterPro" id="IPR013783">
    <property type="entry name" value="Ig-like_fold"/>
</dbReference>
<dbReference type="InterPro" id="IPR014756">
    <property type="entry name" value="Ig_E-set"/>
</dbReference>
<dbReference type="PANTHER" id="PTHR31297:SF41">
    <property type="entry name" value="ENDOGLUCANASE, PUTATIVE (AFU_ORTHOLOGUE AFUA_5G01830)-RELATED"/>
    <property type="match status" value="1"/>
</dbReference>
<dbReference type="PANTHER" id="PTHR31297">
    <property type="entry name" value="GLUCAN ENDO-1,6-BETA-GLUCOSIDASE B"/>
    <property type="match status" value="1"/>
</dbReference>
<dbReference type="Pfam" id="PF18448">
    <property type="entry name" value="CBM46"/>
    <property type="match status" value="1"/>
</dbReference>
<dbReference type="Pfam" id="PF03442">
    <property type="entry name" value="CBM_X2"/>
    <property type="match status" value="1"/>
</dbReference>
<dbReference type="Pfam" id="PF00150">
    <property type="entry name" value="Cellulase"/>
    <property type="match status" value="1"/>
</dbReference>
<dbReference type="PIRSF" id="PIRSF001043">
    <property type="entry name" value="Endoglucanase_B"/>
    <property type="match status" value="1"/>
</dbReference>
<dbReference type="SUPFAM" id="SSF51445">
    <property type="entry name" value="(Trans)glycosidases"/>
    <property type="match status" value="1"/>
</dbReference>
<dbReference type="SUPFAM" id="SSF81296">
    <property type="entry name" value="E set domains"/>
    <property type="match status" value="1"/>
</dbReference>
<dbReference type="PROSITE" id="PS00659">
    <property type="entry name" value="GLYCOSYL_HYDROL_F5"/>
    <property type="match status" value="1"/>
</dbReference>
<comment type="catalytic activity">
    <reaction>
        <text>Endohydrolysis of (1-&gt;4)-beta-D-glucosidic linkages in cellulose, lichenin and cereal beta-D-glucans.</text>
        <dbReference type="EC" id="3.2.1.4"/>
    </reaction>
</comment>
<comment type="similarity">
    <text evidence="2">Belongs to the glycosyl hydrolase 5 (cellulase A) family.</text>
</comment>
<evidence type="ECO:0000250" key="1"/>
<evidence type="ECO:0000305" key="2"/>
<feature type="signal peptide">
    <location>
        <begin position="1"/>
        <end position="30"/>
    </location>
</feature>
<feature type="chain" id="PRO_0000007835" description="Endoglucanase B">
    <location>
        <begin position="31"/>
        <end position="566"/>
    </location>
</feature>
<feature type="active site" description="Proton donor" evidence="1">
    <location>
        <position position="177"/>
    </location>
</feature>
<feature type="active site" description="Nucleophile" evidence="1">
    <location>
        <position position="299"/>
    </location>
</feature>
<name>GUNB_PAELA</name>
<keyword id="KW-0119">Carbohydrate metabolism</keyword>
<keyword id="KW-0136">Cellulose degradation</keyword>
<keyword id="KW-0326">Glycosidase</keyword>
<keyword id="KW-0378">Hydrolase</keyword>
<keyword id="KW-0624">Polysaccharide degradation</keyword>
<keyword id="KW-0732">Signal</keyword>